<organism>
    <name type="scientific">Saccharolobus solfataricus (strain ATCC 35092 / DSM 1617 / JCM 11322 / P2)</name>
    <name type="common">Sulfolobus solfataricus</name>
    <dbReference type="NCBI Taxonomy" id="273057"/>
    <lineage>
        <taxon>Archaea</taxon>
        <taxon>Thermoproteota</taxon>
        <taxon>Thermoprotei</taxon>
        <taxon>Sulfolobales</taxon>
        <taxon>Sulfolobaceae</taxon>
        <taxon>Saccharolobus</taxon>
    </lineage>
</organism>
<comment type="function">
    <text evidence="1">Catalyzes the addition and repair of the essential 3'-terminal CCA sequence in tRNAs without using a nucleic acid template. Adds these three nucleotides in the order of C, C, and A to the tRNA nucleotide-73, using CTP and ATP as substrates and producing inorganic pyrophosphate. tRNA 3'-terminal CCA addition is required both for tRNA processing and repair. Also involved in tRNA surveillance by mediating tandem CCA addition to generate a CCACCA at the 3' terminus of unstable tRNAs. While stable tRNAs receive only 3'-terminal CCA, unstable tRNAs are marked with CCACCA and rapidly degraded.</text>
</comment>
<comment type="catalytic activity">
    <reaction evidence="1">
        <text>a tRNA precursor + 2 CTP + ATP = a tRNA with a 3' CCA end + 3 diphosphate</text>
        <dbReference type="Rhea" id="RHEA:14433"/>
        <dbReference type="Rhea" id="RHEA-COMP:10465"/>
        <dbReference type="Rhea" id="RHEA-COMP:10468"/>
        <dbReference type="ChEBI" id="CHEBI:30616"/>
        <dbReference type="ChEBI" id="CHEBI:33019"/>
        <dbReference type="ChEBI" id="CHEBI:37563"/>
        <dbReference type="ChEBI" id="CHEBI:74896"/>
        <dbReference type="ChEBI" id="CHEBI:83071"/>
        <dbReference type="EC" id="2.7.7.72"/>
    </reaction>
</comment>
<comment type="catalytic activity">
    <reaction evidence="1">
        <text>a tRNA with a 3' CCA end + 2 CTP + ATP = a tRNA with a 3' CCACCA end + 3 diphosphate</text>
        <dbReference type="Rhea" id="RHEA:76235"/>
        <dbReference type="Rhea" id="RHEA-COMP:10468"/>
        <dbReference type="Rhea" id="RHEA-COMP:18655"/>
        <dbReference type="ChEBI" id="CHEBI:30616"/>
        <dbReference type="ChEBI" id="CHEBI:33019"/>
        <dbReference type="ChEBI" id="CHEBI:37563"/>
        <dbReference type="ChEBI" id="CHEBI:83071"/>
        <dbReference type="ChEBI" id="CHEBI:195187"/>
    </reaction>
    <physiologicalReaction direction="left-to-right" evidence="1">
        <dbReference type="Rhea" id="RHEA:76236"/>
    </physiologicalReaction>
</comment>
<comment type="cofactor">
    <cofactor evidence="1">
        <name>Mg(2+)</name>
        <dbReference type="ChEBI" id="CHEBI:18420"/>
    </cofactor>
</comment>
<comment type="subunit">
    <text evidence="1">Homodimer.</text>
</comment>
<comment type="miscellaneous">
    <text evidence="1">A single active site specifically recognizes both ATP and CTP and is responsible for their addition.</text>
</comment>
<comment type="similarity">
    <text evidence="1">Belongs to the tRNA nucleotidyltransferase/poly(A) polymerase family. Archaeal CCA-adding enzyme subfamily.</text>
</comment>
<sequence length="412" mass="47951">MIEEEVLKIIKPTEEDKKGIEKVLEIIRERLNKLDFEVEGSFRKGTWLRQDTDIDVFVFYPKDVGKEYLERNALNDIINRIKDLDYTLAYAEHPYVIVNINNVEVDIVPALRVESGDKAITAVDRTPFHTKYVTSHLDERGKDEVRLLKRFMKGIGVYGAELKVQGFSGYATELLIIYYGNFRKVLEEASKWKHPIKIELTKPMKIFSEPLIIPDPVDPKRNVTAAVSLKNIATFSIAAKYYLKNPSIEFFFPSKKVEEKVKGDVLILRLNLDEKSSEDIVWGQIKRSVNKIERALKQYGFRVIDVQAWGDTNNITIAVQLESKNIGQYYLNIGPQYYSGTIEDFIQKNDNIWVGEDGRLYSIKERKEYDAETIAKKNIVLKVKYNIESYWLQNTEDQQIMKFLRKTPTWLK</sequence>
<name>CCA_SACS2</name>
<gene>
    <name evidence="1" type="primary">cca</name>
    <name type="ordered locus">SSO1039</name>
</gene>
<proteinExistence type="inferred from homology"/>
<reference key="1">
    <citation type="journal article" date="2001" name="Proc. Natl. Acad. Sci. U.S.A.">
        <title>The complete genome of the crenarchaeon Sulfolobus solfataricus P2.</title>
        <authorList>
            <person name="She Q."/>
            <person name="Singh R.K."/>
            <person name="Confalonieri F."/>
            <person name="Zivanovic Y."/>
            <person name="Allard G."/>
            <person name="Awayez M.J."/>
            <person name="Chan-Weiher C.C.-Y."/>
            <person name="Clausen I.G."/>
            <person name="Curtis B.A."/>
            <person name="De Moors A."/>
            <person name="Erauso G."/>
            <person name="Fletcher C."/>
            <person name="Gordon P.M.K."/>
            <person name="Heikamp-de Jong I."/>
            <person name="Jeffries A.C."/>
            <person name="Kozera C.J."/>
            <person name="Medina N."/>
            <person name="Peng X."/>
            <person name="Thi-Ngoc H.P."/>
            <person name="Redder P."/>
            <person name="Schenk M.E."/>
            <person name="Theriault C."/>
            <person name="Tolstrup N."/>
            <person name="Charlebois R.L."/>
            <person name="Doolittle W.F."/>
            <person name="Duguet M."/>
            <person name="Gaasterland T."/>
            <person name="Garrett R.A."/>
            <person name="Ragan M.A."/>
            <person name="Sensen C.W."/>
            <person name="Van der Oost J."/>
        </authorList>
    </citation>
    <scope>NUCLEOTIDE SEQUENCE [LARGE SCALE GENOMIC DNA]</scope>
    <source>
        <strain>ATCC 35092 / DSM 1617 / JCM 11322 / P2</strain>
    </source>
</reference>
<evidence type="ECO:0000255" key="1">
    <source>
        <dbReference type="HAMAP-Rule" id="MF_01264"/>
    </source>
</evidence>
<dbReference type="EC" id="2.7.7.72" evidence="1"/>
<dbReference type="EMBL" id="AE006641">
    <property type="protein sequence ID" value="AAK41301.1"/>
    <property type="molecule type" value="Genomic_DNA"/>
</dbReference>
<dbReference type="PIR" id="F90255">
    <property type="entry name" value="F90255"/>
</dbReference>
<dbReference type="RefSeq" id="WP_009989193.1">
    <property type="nucleotide sequence ID" value="NC_002754.1"/>
</dbReference>
<dbReference type="SMR" id="Q97Z92"/>
<dbReference type="FunCoup" id="Q97Z92">
    <property type="interactions" value="1"/>
</dbReference>
<dbReference type="STRING" id="273057.SSO1039"/>
<dbReference type="PaxDb" id="273057-SSO1039"/>
<dbReference type="EnsemblBacteria" id="AAK41301">
    <property type="protein sequence ID" value="AAK41301"/>
    <property type="gene ID" value="SSO1039"/>
</dbReference>
<dbReference type="GeneID" id="44129968"/>
<dbReference type="KEGG" id="sso:SSO1039"/>
<dbReference type="PATRIC" id="fig|273057.12.peg.1033"/>
<dbReference type="eggNOG" id="arCOG04249">
    <property type="taxonomic scope" value="Archaea"/>
</dbReference>
<dbReference type="HOGENOM" id="CLU_044679_1_0_2"/>
<dbReference type="InParanoid" id="Q97Z92"/>
<dbReference type="PhylomeDB" id="Q97Z92"/>
<dbReference type="Proteomes" id="UP000001974">
    <property type="component" value="Chromosome"/>
</dbReference>
<dbReference type="GO" id="GO:0005524">
    <property type="term" value="F:ATP binding"/>
    <property type="evidence" value="ECO:0007669"/>
    <property type="project" value="UniProtKB-UniRule"/>
</dbReference>
<dbReference type="GO" id="GO:0004810">
    <property type="term" value="F:CCA tRNA nucleotidyltransferase activity"/>
    <property type="evidence" value="ECO:0007669"/>
    <property type="project" value="UniProtKB-UniRule"/>
</dbReference>
<dbReference type="GO" id="GO:0000287">
    <property type="term" value="F:magnesium ion binding"/>
    <property type="evidence" value="ECO:0007669"/>
    <property type="project" value="UniProtKB-UniRule"/>
</dbReference>
<dbReference type="GO" id="GO:0000049">
    <property type="term" value="F:tRNA binding"/>
    <property type="evidence" value="ECO:0007669"/>
    <property type="project" value="UniProtKB-UniRule"/>
</dbReference>
<dbReference type="GO" id="GO:0042245">
    <property type="term" value="P:RNA repair"/>
    <property type="evidence" value="ECO:0007669"/>
    <property type="project" value="UniProtKB-KW"/>
</dbReference>
<dbReference type="GO" id="GO:0001680">
    <property type="term" value="P:tRNA 3'-terminal CCA addition"/>
    <property type="evidence" value="ECO:0007669"/>
    <property type="project" value="UniProtKB-UniRule"/>
</dbReference>
<dbReference type="CDD" id="cd05400">
    <property type="entry name" value="NT_2-5OAS_ClassI-CCAase"/>
    <property type="match status" value="1"/>
</dbReference>
<dbReference type="Gene3D" id="3.30.460.10">
    <property type="entry name" value="Beta Polymerase, domain 2"/>
    <property type="match status" value="1"/>
</dbReference>
<dbReference type="Gene3D" id="1.10.1410.30">
    <property type="entry name" value="CCA tRNA nucleotidyltransferase, domain 2"/>
    <property type="match status" value="1"/>
</dbReference>
<dbReference type="Gene3D" id="3.30.70.590">
    <property type="entry name" value="Poly(A) polymerase predicted RNA binding domain"/>
    <property type="match status" value="1"/>
</dbReference>
<dbReference type="HAMAP" id="MF_01264">
    <property type="entry name" value="CCA_arch"/>
    <property type="match status" value="1"/>
</dbReference>
<dbReference type="InterPro" id="IPR048833">
    <property type="entry name" value="CAA_C"/>
</dbReference>
<dbReference type="InterPro" id="IPR008229">
    <property type="entry name" value="CCA-adding_arc"/>
</dbReference>
<dbReference type="InterPro" id="IPR042090">
    <property type="entry name" value="CCA_tRNA_nucleotrans_2"/>
</dbReference>
<dbReference type="InterPro" id="IPR006116">
    <property type="entry name" value="NT_2-5OAS_ClassI-CCAase"/>
</dbReference>
<dbReference type="InterPro" id="IPR043519">
    <property type="entry name" value="NT_sf"/>
</dbReference>
<dbReference type="InterPro" id="IPR011068">
    <property type="entry name" value="NuclTrfase_I-like_C"/>
</dbReference>
<dbReference type="InterPro" id="IPR002934">
    <property type="entry name" value="Polymerase_NTP_transf_dom"/>
</dbReference>
<dbReference type="InterPro" id="IPR015329">
    <property type="entry name" value="tRNA_NucTransf2"/>
</dbReference>
<dbReference type="NCBIfam" id="TIGR03671">
    <property type="entry name" value="cca_archaeal"/>
    <property type="match status" value="1"/>
</dbReference>
<dbReference type="PANTHER" id="PTHR39643">
    <property type="entry name" value="CCA-ADDING ENZYME"/>
    <property type="match status" value="1"/>
</dbReference>
<dbReference type="PANTHER" id="PTHR39643:SF1">
    <property type="entry name" value="CCA-ADDING ENZYME"/>
    <property type="match status" value="1"/>
</dbReference>
<dbReference type="Pfam" id="PF21133">
    <property type="entry name" value="CAA_C"/>
    <property type="match status" value="1"/>
</dbReference>
<dbReference type="Pfam" id="PF01909">
    <property type="entry name" value="NTP_transf_2"/>
    <property type="match status" value="1"/>
</dbReference>
<dbReference type="Pfam" id="PF09249">
    <property type="entry name" value="tRNA_NucTransf2"/>
    <property type="match status" value="1"/>
</dbReference>
<dbReference type="PIRSF" id="PIRSF005335">
    <property type="entry name" value="CCA_arch"/>
    <property type="match status" value="1"/>
</dbReference>
<dbReference type="SUPFAM" id="SSF81301">
    <property type="entry name" value="Nucleotidyltransferase"/>
    <property type="match status" value="1"/>
</dbReference>
<dbReference type="SUPFAM" id="SSF55003">
    <property type="entry name" value="PAP/Archaeal CCA-adding enzyme, C-terminal domain"/>
    <property type="match status" value="1"/>
</dbReference>
<dbReference type="SUPFAM" id="SSF81631">
    <property type="entry name" value="PAP/OAS1 substrate-binding domain"/>
    <property type="match status" value="1"/>
</dbReference>
<accession>Q97Z92</accession>
<feature type="chain" id="PRO_0000139083" description="CCA-adding enzyme">
    <location>
        <begin position="1"/>
        <end position="412"/>
    </location>
</feature>
<feature type="binding site" evidence="1">
    <location>
        <position position="41"/>
    </location>
    <ligand>
        <name>ATP</name>
        <dbReference type="ChEBI" id="CHEBI:30616"/>
    </ligand>
</feature>
<feature type="binding site" evidence="1">
    <location>
        <position position="41"/>
    </location>
    <ligand>
        <name>CTP</name>
        <dbReference type="ChEBI" id="CHEBI:37563"/>
    </ligand>
</feature>
<feature type="binding site" evidence="1">
    <location>
        <position position="44"/>
    </location>
    <ligand>
        <name>ATP</name>
        <dbReference type="ChEBI" id="CHEBI:30616"/>
    </ligand>
</feature>
<feature type="binding site" evidence="1">
    <location>
        <position position="44"/>
    </location>
    <ligand>
        <name>CTP</name>
        <dbReference type="ChEBI" id="CHEBI:37563"/>
    </ligand>
</feature>
<feature type="binding site" evidence="1">
    <location>
        <position position="53"/>
    </location>
    <ligand>
        <name>Mg(2+)</name>
        <dbReference type="ChEBI" id="CHEBI:18420"/>
    </ligand>
</feature>
<feature type="binding site" evidence="1">
    <location>
        <position position="55"/>
    </location>
    <ligand>
        <name>Mg(2+)</name>
        <dbReference type="ChEBI" id="CHEBI:18420"/>
    </ligand>
</feature>
<feature type="binding site" evidence="1">
    <location>
        <position position="106"/>
    </location>
    <ligand>
        <name>Mg(2+)</name>
        <dbReference type="ChEBI" id="CHEBI:18420"/>
    </ligand>
</feature>
<feature type="binding site" evidence="1">
    <location>
        <position position="129"/>
    </location>
    <ligand>
        <name>ATP</name>
        <dbReference type="ChEBI" id="CHEBI:30616"/>
    </ligand>
</feature>
<feature type="binding site" evidence="1">
    <location>
        <position position="129"/>
    </location>
    <ligand>
        <name>CTP</name>
        <dbReference type="ChEBI" id="CHEBI:37563"/>
    </ligand>
</feature>
<feature type="binding site" evidence="1">
    <location>
        <position position="149"/>
    </location>
    <ligand>
        <name>ATP</name>
        <dbReference type="ChEBI" id="CHEBI:30616"/>
    </ligand>
</feature>
<feature type="binding site" evidence="1">
    <location>
        <position position="149"/>
    </location>
    <ligand>
        <name>CTP</name>
        <dbReference type="ChEBI" id="CHEBI:37563"/>
    </ligand>
</feature>
<feature type="binding site" evidence="1">
    <location>
        <position position="158"/>
    </location>
    <ligand>
        <name>ATP</name>
        <dbReference type="ChEBI" id="CHEBI:30616"/>
    </ligand>
</feature>
<feature type="binding site" evidence="1">
    <location>
        <position position="158"/>
    </location>
    <ligand>
        <name>CTP</name>
        <dbReference type="ChEBI" id="CHEBI:37563"/>
    </ligand>
</feature>
<protein>
    <recommendedName>
        <fullName evidence="1">CCA-adding enzyme</fullName>
        <ecNumber evidence="1">2.7.7.72</ecNumber>
    </recommendedName>
    <alternativeName>
        <fullName evidence="1">CCA tRNA nucleotidyltransferase</fullName>
    </alternativeName>
    <alternativeName>
        <fullName evidence="1">tRNA CCA-pyrophosphorylase</fullName>
    </alternativeName>
    <alternativeName>
        <fullName evidence="1">tRNA adenylyl-/cytidylyl- transferase</fullName>
    </alternativeName>
    <alternativeName>
        <fullName evidence="1">tRNA nucleotidyltransferase</fullName>
    </alternativeName>
    <alternativeName>
        <fullName evidence="1">tRNA-NT</fullName>
    </alternativeName>
</protein>
<keyword id="KW-0067">ATP-binding</keyword>
<keyword id="KW-0460">Magnesium</keyword>
<keyword id="KW-0479">Metal-binding</keyword>
<keyword id="KW-0547">Nucleotide-binding</keyword>
<keyword id="KW-0548">Nucleotidyltransferase</keyword>
<keyword id="KW-1185">Reference proteome</keyword>
<keyword id="KW-0692">RNA repair</keyword>
<keyword id="KW-0694">RNA-binding</keyword>
<keyword id="KW-0808">Transferase</keyword>
<keyword id="KW-0819">tRNA processing</keyword>